<protein>
    <recommendedName>
        <fullName evidence="1">Aspartate--ammonia ligase</fullName>
        <ecNumber evidence="1">6.3.1.1</ecNumber>
    </recommendedName>
    <alternativeName>
        <fullName evidence="1">Asparagine synthetase A</fullName>
    </alternativeName>
</protein>
<keyword id="KW-0028">Amino-acid biosynthesis</keyword>
<keyword id="KW-0061">Asparagine biosynthesis</keyword>
<keyword id="KW-0067">ATP-binding</keyword>
<keyword id="KW-0963">Cytoplasm</keyword>
<keyword id="KW-0436">Ligase</keyword>
<keyword id="KW-0547">Nucleotide-binding</keyword>
<reference key="1">
    <citation type="journal article" date="2008" name="PLoS Genet.">
        <title>Complete genome sequence of the N2-fixing broad host range endophyte Klebsiella pneumoniae 342 and virulence predictions verified in mice.</title>
        <authorList>
            <person name="Fouts D.E."/>
            <person name="Tyler H.L."/>
            <person name="DeBoy R.T."/>
            <person name="Daugherty S."/>
            <person name="Ren Q."/>
            <person name="Badger J.H."/>
            <person name="Durkin A.S."/>
            <person name="Huot H."/>
            <person name="Shrivastava S."/>
            <person name="Kothari S."/>
            <person name="Dodson R.J."/>
            <person name="Mohamoud Y."/>
            <person name="Khouri H."/>
            <person name="Roesch L.F.W."/>
            <person name="Krogfelt K.A."/>
            <person name="Struve C."/>
            <person name="Triplett E.W."/>
            <person name="Methe B.A."/>
        </authorList>
    </citation>
    <scope>NUCLEOTIDE SEQUENCE [LARGE SCALE GENOMIC DNA]</scope>
    <source>
        <strain>342</strain>
    </source>
</reference>
<organism>
    <name type="scientific">Klebsiella pneumoniae (strain 342)</name>
    <dbReference type="NCBI Taxonomy" id="507522"/>
    <lineage>
        <taxon>Bacteria</taxon>
        <taxon>Pseudomonadati</taxon>
        <taxon>Pseudomonadota</taxon>
        <taxon>Gammaproteobacteria</taxon>
        <taxon>Enterobacterales</taxon>
        <taxon>Enterobacteriaceae</taxon>
        <taxon>Klebsiella/Raoultella group</taxon>
        <taxon>Klebsiella</taxon>
        <taxon>Klebsiella pneumoniae complex</taxon>
    </lineage>
</organism>
<gene>
    <name evidence="1" type="primary">asnA</name>
    <name type="ordered locus">KPK_5532</name>
</gene>
<sequence length="330" mass="36826">MKTAYIAKQRQISFVKSHFSRQLEEKLGLIEVQAPILSRVGDGTQDNLSGCEKAVQVKVKTLPDAQFEVVHSLAKWKRQTLGQHDFSAGEGLYTHMKALRPDEDRLTPIHSVYVDQWDWERVMGDEERHVGTLKATVEAIYAGIKATELAVSQEFGLKPFLPEQIHFVHSQELLSRYPDLDAKGRERAIAKELGAVFLIGIGGKLSNGKRHDVRAPDYDDWSTEVSEGFAGLNGDILVWNPVLEDAFEISSMGIRVDAEALKRQLAVTGDEDRLQLEWHQALLRGEMPQTIGGGIGQSRLTMLLLQLDHIGQVQCGVWPAQVRESVSALL</sequence>
<feature type="chain" id="PRO_1000129120" description="Aspartate--ammonia ligase">
    <location>
        <begin position="1"/>
        <end position="330"/>
    </location>
</feature>
<dbReference type="EC" id="6.3.1.1" evidence="1"/>
<dbReference type="EMBL" id="CP000964">
    <property type="protein sequence ID" value="ACI09724.1"/>
    <property type="molecule type" value="Genomic_DNA"/>
</dbReference>
<dbReference type="SMR" id="B5XZL2"/>
<dbReference type="KEGG" id="kpe:KPK_5532"/>
<dbReference type="HOGENOM" id="CLU_071543_0_0_6"/>
<dbReference type="UniPathway" id="UPA00134">
    <property type="reaction ID" value="UER00194"/>
</dbReference>
<dbReference type="Proteomes" id="UP000001734">
    <property type="component" value="Chromosome"/>
</dbReference>
<dbReference type="GO" id="GO:0005829">
    <property type="term" value="C:cytosol"/>
    <property type="evidence" value="ECO:0007669"/>
    <property type="project" value="TreeGrafter"/>
</dbReference>
<dbReference type="GO" id="GO:0004071">
    <property type="term" value="F:aspartate-ammonia ligase activity"/>
    <property type="evidence" value="ECO:0007669"/>
    <property type="project" value="UniProtKB-UniRule"/>
</dbReference>
<dbReference type="GO" id="GO:0005524">
    <property type="term" value="F:ATP binding"/>
    <property type="evidence" value="ECO:0007669"/>
    <property type="project" value="UniProtKB-UniRule"/>
</dbReference>
<dbReference type="GO" id="GO:0070981">
    <property type="term" value="P:L-asparagine biosynthetic process"/>
    <property type="evidence" value="ECO:0007669"/>
    <property type="project" value="UniProtKB-UniRule"/>
</dbReference>
<dbReference type="CDD" id="cd00645">
    <property type="entry name" value="AsnA"/>
    <property type="match status" value="1"/>
</dbReference>
<dbReference type="Gene3D" id="3.30.930.10">
    <property type="entry name" value="Bira Bifunctional Protein, Domain 2"/>
    <property type="match status" value="1"/>
</dbReference>
<dbReference type="HAMAP" id="MF_00555">
    <property type="entry name" value="AsnA"/>
    <property type="match status" value="1"/>
</dbReference>
<dbReference type="InterPro" id="IPR006195">
    <property type="entry name" value="aa-tRNA-synth_II"/>
</dbReference>
<dbReference type="InterPro" id="IPR045864">
    <property type="entry name" value="aa-tRNA-synth_II/BPL/LPL"/>
</dbReference>
<dbReference type="InterPro" id="IPR004618">
    <property type="entry name" value="AsnA"/>
</dbReference>
<dbReference type="NCBIfam" id="TIGR00669">
    <property type="entry name" value="asnA"/>
    <property type="match status" value="1"/>
</dbReference>
<dbReference type="PANTHER" id="PTHR30073">
    <property type="entry name" value="ASPARTATE--AMMONIA LIGASE"/>
    <property type="match status" value="1"/>
</dbReference>
<dbReference type="PANTHER" id="PTHR30073:SF5">
    <property type="entry name" value="ASPARTATE--AMMONIA LIGASE"/>
    <property type="match status" value="1"/>
</dbReference>
<dbReference type="Pfam" id="PF03590">
    <property type="entry name" value="AsnA"/>
    <property type="match status" value="1"/>
</dbReference>
<dbReference type="PIRSF" id="PIRSF001555">
    <property type="entry name" value="Asp_ammon_ligase"/>
    <property type="match status" value="1"/>
</dbReference>
<dbReference type="SUPFAM" id="SSF55681">
    <property type="entry name" value="Class II aaRS and biotin synthetases"/>
    <property type="match status" value="1"/>
</dbReference>
<dbReference type="PROSITE" id="PS50862">
    <property type="entry name" value="AA_TRNA_LIGASE_II"/>
    <property type="match status" value="1"/>
</dbReference>
<evidence type="ECO:0000255" key="1">
    <source>
        <dbReference type="HAMAP-Rule" id="MF_00555"/>
    </source>
</evidence>
<comment type="catalytic activity">
    <reaction evidence="1">
        <text>L-aspartate + NH4(+) + ATP = L-asparagine + AMP + diphosphate + H(+)</text>
        <dbReference type="Rhea" id="RHEA:11372"/>
        <dbReference type="ChEBI" id="CHEBI:15378"/>
        <dbReference type="ChEBI" id="CHEBI:28938"/>
        <dbReference type="ChEBI" id="CHEBI:29991"/>
        <dbReference type="ChEBI" id="CHEBI:30616"/>
        <dbReference type="ChEBI" id="CHEBI:33019"/>
        <dbReference type="ChEBI" id="CHEBI:58048"/>
        <dbReference type="ChEBI" id="CHEBI:456215"/>
        <dbReference type="EC" id="6.3.1.1"/>
    </reaction>
</comment>
<comment type="pathway">
    <text evidence="1">Amino-acid biosynthesis; L-asparagine biosynthesis; L-asparagine from L-aspartate (ammonia route): step 1/1.</text>
</comment>
<comment type="subcellular location">
    <subcellularLocation>
        <location evidence="1">Cytoplasm</location>
    </subcellularLocation>
</comment>
<comment type="similarity">
    <text evidence="1">Belongs to the class-II aminoacyl-tRNA synthetase family. AsnA subfamily.</text>
</comment>
<proteinExistence type="inferred from homology"/>
<name>ASNA_KLEP3</name>
<accession>B5XZL2</accession>